<dbReference type="EC" id="1.2.1.-" evidence="2"/>
<dbReference type="EMBL" id="CP000253">
    <property type="protein sequence ID" value="ABD31190.1"/>
    <property type="molecule type" value="Genomic_DNA"/>
</dbReference>
<dbReference type="RefSeq" id="WP_001021214.1">
    <property type="nucleotide sequence ID" value="NZ_LS483365.1"/>
</dbReference>
<dbReference type="RefSeq" id="YP_500632.1">
    <property type="nucleotide sequence ID" value="NC_007795.1"/>
</dbReference>
<dbReference type="PDB" id="6K0Z">
    <property type="method" value="X-ray"/>
    <property type="resolution" value="2.50 A"/>
    <property type="chains" value="A=1-459"/>
</dbReference>
<dbReference type="PDB" id="6K10">
    <property type="method" value="X-ray"/>
    <property type="resolution" value="1.79 A"/>
    <property type="chains" value="A=1-459"/>
</dbReference>
<dbReference type="PDBsum" id="6K0Z"/>
<dbReference type="PDBsum" id="6K10"/>
<dbReference type="SMR" id="Q2FWX9"/>
<dbReference type="STRING" id="93061.SAOUHSC_02142"/>
<dbReference type="PaxDb" id="1280-SAXN108_2023"/>
<dbReference type="GeneID" id="3921839"/>
<dbReference type="KEGG" id="sao:SAOUHSC_02142"/>
<dbReference type="PATRIC" id="fig|93061.5.peg.1943"/>
<dbReference type="eggNOG" id="COG1012">
    <property type="taxonomic scope" value="Bacteria"/>
</dbReference>
<dbReference type="HOGENOM" id="CLU_005391_3_1_9"/>
<dbReference type="OrthoDB" id="9762913at2"/>
<dbReference type="Proteomes" id="UP000008816">
    <property type="component" value="Chromosome"/>
</dbReference>
<dbReference type="GO" id="GO:0005737">
    <property type="term" value="C:cytoplasm"/>
    <property type="evidence" value="ECO:0000318"/>
    <property type="project" value="GO_Central"/>
</dbReference>
<dbReference type="GO" id="GO:0004029">
    <property type="term" value="F:aldehyde dehydrogenase (NAD+) activity"/>
    <property type="evidence" value="ECO:0000318"/>
    <property type="project" value="GO_Central"/>
</dbReference>
<dbReference type="GO" id="GO:0016620">
    <property type="term" value="F:oxidoreductase activity, acting on the aldehyde or oxo group of donors, NAD or NADP as acceptor"/>
    <property type="evidence" value="ECO:0000314"/>
    <property type="project" value="UniProtKB"/>
</dbReference>
<dbReference type="GO" id="GO:0006081">
    <property type="term" value="P:aldehyde metabolic process"/>
    <property type="evidence" value="ECO:0000318"/>
    <property type="project" value="GO_Central"/>
</dbReference>
<dbReference type="GO" id="GO:0016117">
    <property type="term" value="P:carotenoid biosynthetic process"/>
    <property type="evidence" value="ECO:0000314"/>
    <property type="project" value="UniProtKB"/>
</dbReference>
<dbReference type="CDD" id="cd07136">
    <property type="entry name" value="ALDH_YwdH-P39616"/>
    <property type="match status" value="1"/>
</dbReference>
<dbReference type="FunFam" id="3.40.309.10:FF:000003">
    <property type="entry name" value="Aldehyde dehydrogenase"/>
    <property type="match status" value="1"/>
</dbReference>
<dbReference type="FunFam" id="3.40.605.10:FF:000004">
    <property type="entry name" value="Aldehyde dehydrogenase"/>
    <property type="match status" value="1"/>
</dbReference>
<dbReference type="Gene3D" id="3.40.605.10">
    <property type="entry name" value="Aldehyde Dehydrogenase, Chain A, domain 1"/>
    <property type="match status" value="1"/>
</dbReference>
<dbReference type="Gene3D" id="3.40.309.10">
    <property type="entry name" value="Aldehyde Dehydrogenase, Chain A, domain 2"/>
    <property type="match status" value="1"/>
</dbReference>
<dbReference type="InterPro" id="IPR016161">
    <property type="entry name" value="Ald_DH/histidinol_DH"/>
</dbReference>
<dbReference type="InterPro" id="IPR016163">
    <property type="entry name" value="Ald_DH_C"/>
</dbReference>
<dbReference type="InterPro" id="IPR016160">
    <property type="entry name" value="Ald_DH_CS_CYS"/>
</dbReference>
<dbReference type="InterPro" id="IPR029510">
    <property type="entry name" value="Ald_DH_CS_GLU"/>
</dbReference>
<dbReference type="InterPro" id="IPR016162">
    <property type="entry name" value="Ald_DH_N"/>
</dbReference>
<dbReference type="InterPro" id="IPR015590">
    <property type="entry name" value="Aldehyde_DH_dom"/>
</dbReference>
<dbReference type="InterPro" id="IPR012394">
    <property type="entry name" value="Aldehyde_DH_NAD(P)"/>
</dbReference>
<dbReference type="PANTHER" id="PTHR43570">
    <property type="entry name" value="ALDEHYDE DEHYDROGENASE"/>
    <property type="match status" value="1"/>
</dbReference>
<dbReference type="PANTHER" id="PTHR43570:SF16">
    <property type="entry name" value="ALDEHYDE DEHYDROGENASE TYPE III, ISOFORM Q"/>
    <property type="match status" value="1"/>
</dbReference>
<dbReference type="Pfam" id="PF00171">
    <property type="entry name" value="Aldedh"/>
    <property type="match status" value="1"/>
</dbReference>
<dbReference type="PIRSF" id="PIRSF036492">
    <property type="entry name" value="ALDH"/>
    <property type="match status" value="1"/>
</dbReference>
<dbReference type="SUPFAM" id="SSF53720">
    <property type="entry name" value="ALDH-like"/>
    <property type="match status" value="1"/>
</dbReference>
<dbReference type="PROSITE" id="PS00070">
    <property type="entry name" value="ALDEHYDE_DEHYDR_CYS"/>
    <property type="match status" value="1"/>
</dbReference>
<dbReference type="PROSITE" id="PS00687">
    <property type="entry name" value="ALDEHYDE_DEHYDR_GLU"/>
    <property type="match status" value="1"/>
</dbReference>
<keyword id="KW-0002">3D-structure</keyword>
<keyword id="KW-0125">Carotenoid biosynthesis</keyword>
<keyword id="KW-0520">NAD</keyword>
<keyword id="KW-0560">Oxidoreductase</keyword>
<keyword id="KW-1185">Reference proteome</keyword>
<keyword id="KW-0843">Virulence</keyword>
<sequence length="459" mass="51741">MNIIEQKFYDSKAFFNTQQTKDISFRKEQLKKLSKAIKSYESDILEALYTDLGKNKVEAYATEIGITLKSIKIARKELKNWTKTKNVDTPLYLFPTKSYIKKEPYGTVLIIAPFNYPFQLVFEPLIGAIAAGNTAIIKPSELTPNVARVIKRLINETFDANYIEVIEGGIEETQTLIHLPFDYVFFTGSENVGKIVYQAASENLVPVTLEMGGKSPVIVDETANIKVASERICFGKFTNAGQTCVAPDYILVHESVKDDLITALSKTLREFYGQNIQQSPDYGRIVNLKHYHRLTSLLNSAQMNIVFGGHSDEDERYIEPTLLDHVTSDSAIMQEEIFGPILPILTYQSLDEAIAFIHQRPKPLSLYLFSEDENATQRVINELSFGGGAINDTLMHLANPKLPFGGVGASGMGRYHGKYSFDTFTHEKSYIFKSTRLESGVHLPPYKGKFKYIKAFFKN</sequence>
<evidence type="ECO:0000250" key="1">
    <source>
        <dbReference type="UniProtKB" id="P25526"/>
    </source>
</evidence>
<evidence type="ECO:0000269" key="2">
    <source>
    </source>
</evidence>
<evidence type="ECO:0000303" key="3">
    <source>
    </source>
</evidence>
<evidence type="ECO:0000305" key="4"/>
<evidence type="ECO:0000305" key="5">
    <source>
    </source>
</evidence>
<evidence type="ECO:0000312" key="6">
    <source>
        <dbReference type="EMBL" id="ABD31190.1"/>
    </source>
</evidence>
<evidence type="ECO:0000312" key="7">
    <source>
        <dbReference type="Proteomes" id="UP000008816"/>
    </source>
</evidence>
<evidence type="ECO:0007829" key="8">
    <source>
        <dbReference type="PDB" id="6K0Z"/>
    </source>
</evidence>
<evidence type="ECO:0007829" key="9">
    <source>
        <dbReference type="PDB" id="6K10"/>
    </source>
</evidence>
<accession>Q2FWX9</accession>
<feature type="chain" id="PRO_0000444879" description="4,4'-diaponeurosporen-aldehyde dehydrogenase">
    <location>
        <begin position="1"/>
        <end position="459"/>
    </location>
</feature>
<feature type="active site" description="Proton acceptor" evidence="1">
    <location>
        <position position="210"/>
    </location>
</feature>
<feature type="active site" description="Nucleophile" evidence="1">
    <location>
        <position position="244"/>
    </location>
</feature>
<feature type="binding site" evidence="1">
    <location>
        <begin position="114"/>
        <end position="115"/>
    </location>
    <ligand>
        <name>NAD(+)</name>
        <dbReference type="ChEBI" id="CHEBI:57540"/>
    </ligand>
</feature>
<feature type="binding site" evidence="1">
    <location>
        <begin position="188"/>
        <end position="189"/>
    </location>
    <ligand>
        <name>NAD(+)</name>
        <dbReference type="ChEBI" id="CHEBI:57540"/>
    </ligand>
</feature>
<feature type="binding site" evidence="1">
    <location>
        <position position="211"/>
    </location>
    <ligand>
        <name>NAD(+)</name>
        <dbReference type="ChEBI" id="CHEBI:57540"/>
    </ligand>
</feature>
<feature type="binding site" evidence="1">
    <location>
        <position position="336"/>
    </location>
    <ligand>
        <name>NAD(+)</name>
        <dbReference type="ChEBI" id="CHEBI:57540"/>
    </ligand>
</feature>
<feature type="helix" evidence="9">
    <location>
        <begin position="3"/>
        <end position="16"/>
    </location>
</feature>
<feature type="helix" evidence="9">
    <location>
        <begin position="19"/>
        <end position="21"/>
    </location>
</feature>
<feature type="helix" evidence="9">
    <location>
        <begin position="23"/>
        <end position="39"/>
    </location>
</feature>
<feature type="helix" evidence="9">
    <location>
        <begin position="41"/>
        <end position="52"/>
    </location>
</feature>
<feature type="helix" evidence="9">
    <location>
        <begin position="56"/>
        <end position="62"/>
    </location>
</feature>
<feature type="helix" evidence="9">
    <location>
        <begin position="64"/>
        <end position="82"/>
    </location>
</feature>
<feature type="strand" evidence="9">
    <location>
        <begin position="85"/>
        <end position="87"/>
    </location>
</feature>
<feature type="helix" evidence="9">
    <location>
        <begin position="91"/>
        <end position="93"/>
    </location>
</feature>
<feature type="strand" evidence="9">
    <location>
        <begin position="97"/>
        <end position="104"/>
    </location>
</feature>
<feature type="strand" evidence="9">
    <location>
        <begin position="106"/>
        <end position="111"/>
    </location>
</feature>
<feature type="strand" evidence="9">
    <location>
        <begin position="114"/>
        <end position="116"/>
    </location>
</feature>
<feature type="helix" evidence="9">
    <location>
        <begin position="119"/>
        <end position="131"/>
    </location>
</feature>
<feature type="strand" evidence="9">
    <location>
        <begin position="134"/>
        <end position="138"/>
    </location>
</feature>
<feature type="strand" evidence="9">
    <location>
        <begin position="141"/>
        <end position="143"/>
    </location>
</feature>
<feature type="helix" evidence="9">
    <location>
        <begin position="144"/>
        <end position="157"/>
    </location>
</feature>
<feature type="turn" evidence="9">
    <location>
        <begin position="160"/>
        <end position="162"/>
    </location>
</feature>
<feature type="strand" evidence="9">
    <location>
        <begin position="163"/>
        <end position="165"/>
    </location>
</feature>
<feature type="helix" evidence="9">
    <location>
        <begin position="170"/>
        <end position="177"/>
    </location>
</feature>
<feature type="strand" evidence="9">
    <location>
        <begin position="182"/>
        <end position="188"/>
    </location>
</feature>
<feature type="helix" evidence="9">
    <location>
        <begin position="190"/>
        <end position="202"/>
    </location>
</feature>
<feature type="strand" evidence="9">
    <location>
        <begin position="207"/>
        <end position="210"/>
    </location>
</feature>
<feature type="strand" evidence="9">
    <location>
        <begin position="216"/>
        <end position="219"/>
    </location>
</feature>
<feature type="helix" evidence="9">
    <location>
        <begin position="225"/>
        <end position="237"/>
    </location>
</feature>
<feature type="helix" evidence="9">
    <location>
        <begin position="238"/>
        <end position="241"/>
    </location>
</feature>
<feature type="strand" evidence="9">
    <location>
        <begin position="249"/>
        <end position="253"/>
    </location>
</feature>
<feature type="helix" evidence="9">
    <location>
        <begin position="254"/>
        <end position="256"/>
    </location>
</feature>
<feature type="helix" evidence="9">
    <location>
        <begin position="257"/>
        <end position="272"/>
    </location>
</feature>
<feature type="helix" evidence="9">
    <location>
        <begin position="276"/>
        <end position="278"/>
    </location>
</feature>
<feature type="helix" evidence="9">
    <location>
        <begin position="288"/>
        <end position="300"/>
    </location>
</feature>
<feature type="helix" evidence="9">
    <location>
        <begin position="302"/>
        <end position="304"/>
    </location>
</feature>
<feature type="strand" evidence="9">
    <location>
        <begin position="305"/>
        <end position="307"/>
    </location>
</feature>
<feature type="helix" evidence="9">
    <location>
        <begin position="313"/>
        <end position="315"/>
    </location>
</feature>
<feature type="strand" evidence="9">
    <location>
        <begin position="321"/>
        <end position="323"/>
    </location>
</feature>
<feature type="helix" evidence="9">
    <location>
        <begin position="331"/>
        <end position="333"/>
    </location>
</feature>
<feature type="strand" evidence="9">
    <location>
        <begin position="339"/>
        <end position="349"/>
    </location>
</feature>
<feature type="helix" evidence="9">
    <location>
        <begin position="350"/>
        <end position="358"/>
    </location>
</feature>
<feature type="strand" evidence="9">
    <location>
        <begin position="364"/>
        <end position="369"/>
    </location>
</feature>
<feature type="helix" evidence="9">
    <location>
        <begin position="373"/>
        <end position="382"/>
    </location>
</feature>
<feature type="strand" evidence="9">
    <location>
        <begin position="386"/>
        <end position="391"/>
    </location>
</feature>
<feature type="helix" evidence="9">
    <location>
        <begin position="395"/>
        <end position="397"/>
    </location>
</feature>
<feature type="helix" evidence="9">
    <location>
        <begin position="408"/>
        <end position="410"/>
    </location>
</feature>
<feature type="helix" evidence="9">
    <location>
        <begin position="418"/>
        <end position="423"/>
    </location>
</feature>
<feature type="strand" evidence="9">
    <location>
        <begin position="425"/>
        <end position="432"/>
    </location>
</feature>
<feature type="strand" evidence="8">
    <location>
        <begin position="435"/>
        <end position="437"/>
    </location>
</feature>
<feature type="strand" evidence="8">
    <location>
        <begin position="441"/>
        <end position="444"/>
    </location>
</feature>
<feature type="helix" evidence="9">
    <location>
        <begin position="450"/>
        <end position="458"/>
    </location>
</feature>
<comment type="function">
    <text evidence="2">Involved in the biosynthesis of the yellow-orange carotenoid staphyloxanthin, which plays a role in the virulence via its protective function against oxidative stress. Catalyzes the oxidation of 4,4'-diaponeurosporen-4-al to yield 4,4'-diaponeurosporenoic acid.</text>
</comment>
<comment type="catalytic activity">
    <reaction evidence="2">
        <text>4,4'-diaponeurosporenal + NAD(+) + H2O = 4,4'-diaponeurosporenoate + NADH + 2 H(+)</text>
        <dbReference type="Rhea" id="RHEA:42384"/>
        <dbReference type="ChEBI" id="CHEBI:15377"/>
        <dbReference type="ChEBI" id="CHEBI:15378"/>
        <dbReference type="ChEBI" id="CHEBI:57540"/>
        <dbReference type="ChEBI" id="CHEBI:57945"/>
        <dbReference type="ChEBI" id="CHEBI:79064"/>
        <dbReference type="ChEBI" id="CHEBI:79065"/>
    </reaction>
</comment>
<comment type="pathway">
    <text evidence="2">Carotenoid biosynthesis; staphyloxanthin biosynthesis; staphyloxanthin from farnesyl diphosphate.</text>
</comment>
<comment type="disruption phenotype">
    <text evidence="2">Cells lacking this gene are unable to produce staphyloxanthin and cause accumulation of 4,4'- diaponeurosporen-4-al.</text>
</comment>
<comment type="similarity">
    <text evidence="4">Belongs to the aldehyde dehydrogenase family.</text>
</comment>
<name>DIALD_STAA8</name>
<organism>
    <name type="scientific">Staphylococcus aureus (strain NCTC 8325 / PS 47)</name>
    <dbReference type="NCBI Taxonomy" id="93061"/>
    <lineage>
        <taxon>Bacteria</taxon>
        <taxon>Bacillati</taxon>
        <taxon>Bacillota</taxon>
        <taxon>Bacilli</taxon>
        <taxon>Bacillales</taxon>
        <taxon>Staphylococcaceae</taxon>
        <taxon>Staphylococcus</taxon>
    </lineage>
</organism>
<proteinExistence type="evidence at protein level"/>
<gene>
    <name evidence="3" type="primary">aldH1</name>
    <name evidence="6" type="ordered locus">SAOUHSC_02142</name>
</gene>
<reference key="1">
    <citation type="book" date="2006" name="Gram positive pathogens, 2nd edition">
        <title>The Staphylococcus aureus NCTC 8325 genome.</title>
        <editorList>
            <person name="Fischetti V."/>
            <person name="Novick R."/>
            <person name="Ferretti J."/>
            <person name="Portnoy D."/>
            <person name="Rood J."/>
        </editorList>
        <authorList>
            <person name="Gillaspy A.F."/>
            <person name="Worrell V."/>
            <person name="Orvis J."/>
            <person name="Roe B.A."/>
            <person name="Dyer D.W."/>
            <person name="Iandolo J.J."/>
        </authorList>
    </citation>
    <scope>NUCLEOTIDE SEQUENCE [LARGE SCALE GENOMIC DNA]</scope>
    <source>
        <strain evidence="7">NCTC 8325 / PS 47</strain>
    </source>
</reference>
<reference key="2">
    <citation type="journal article" date="2012" name="J. Biol. Chem.">
        <title>Functional expression and extension of staphylococcal staphyloxanthin biosynthetic pathway in Escherichia coli.</title>
        <authorList>
            <person name="Kim S.H."/>
            <person name="Lee P.C."/>
        </authorList>
    </citation>
    <scope>FUNCTION</scope>
    <scope>CATALYTIC ACTIVITY</scope>
    <scope>DISRUPTION PHENOTYPE</scope>
    <scope>PATHWAY</scope>
    <source>
        <strain>KCTC 1928</strain>
        <strain>RN4220</strain>
    </source>
</reference>
<protein>
    <recommendedName>
        <fullName evidence="3">4,4'-diaponeurosporen-aldehyde dehydrogenase</fullName>
        <ecNumber evidence="2">1.2.1.-</ecNumber>
    </recommendedName>
    <alternativeName>
        <fullName evidence="5">4,4'-diaponeurosporenal dehydrogenase</fullName>
    </alternativeName>
</protein>